<evidence type="ECO:0000250" key="1"/>
<evidence type="ECO:0000250" key="2">
    <source>
        <dbReference type="UniProtKB" id="P68134"/>
    </source>
</evidence>
<evidence type="ECO:0000250" key="3">
    <source>
        <dbReference type="UniProtKB" id="P68137"/>
    </source>
</evidence>
<evidence type="ECO:0000269" key="4">
    <source>
    </source>
</evidence>
<evidence type="ECO:0000269" key="5">
    <source>
    </source>
</evidence>
<evidence type="ECO:0000269" key="6">
    <source>
    </source>
</evidence>
<evidence type="ECO:0000269" key="7">
    <source>
    </source>
</evidence>
<evidence type="ECO:0000305" key="8"/>
<proteinExistence type="evidence at protein level"/>
<reference key="1">
    <citation type="journal article" date="1988" name="Genetics">
        <title>Molecular and genetic characterization of the Drosophila melanogaster 87E actin gene region.</title>
        <authorList>
            <person name="Manseau L.J."/>
            <person name="Ganetzky B."/>
            <person name="Craig E.A."/>
        </authorList>
    </citation>
    <scope>NUCLEOTIDE SEQUENCE [GENOMIC DNA]</scope>
    <source>
        <strain>Canton-S</strain>
    </source>
</reference>
<reference key="2">
    <citation type="submission" date="1987-12" db="EMBL/GenBank/DDBJ databases">
        <authorList>
            <person name="Fyrberg E.A."/>
            <person name="Bond B.J."/>
            <person name="Hershey N.D."/>
            <person name="Mixter K.S."/>
            <person name="Davidson N."/>
        </authorList>
    </citation>
    <scope>NUCLEOTIDE SEQUENCE [GENOMIC DNA]</scope>
</reference>
<reference key="3">
    <citation type="journal article" date="2000" name="Science">
        <title>The genome sequence of Drosophila melanogaster.</title>
        <authorList>
            <person name="Adams M.D."/>
            <person name="Celniker S.E."/>
            <person name="Holt R.A."/>
            <person name="Evans C.A."/>
            <person name="Gocayne J.D."/>
            <person name="Amanatides P.G."/>
            <person name="Scherer S.E."/>
            <person name="Li P.W."/>
            <person name="Hoskins R.A."/>
            <person name="Galle R.F."/>
            <person name="George R.A."/>
            <person name="Lewis S.E."/>
            <person name="Richards S."/>
            <person name="Ashburner M."/>
            <person name="Henderson S.N."/>
            <person name="Sutton G.G."/>
            <person name="Wortman J.R."/>
            <person name="Yandell M.D."/>
            <person name="Zhang Q."/>
            <person name="Chen L.X."/>
            <person name="Brandon R.C."/>
            <person name="Rogers Y.-H.C."/>
            <person name="Blazej R.G."/>
            <person name="Champe M."/>
            <person name="Pfeiffer B.D."/>
            <person name="Wan K.H."/>
            <person name="Doyle C."/>
            <person name="Baxter E.G."/>
            <person name="Helt G."/>
            <person name="Nelson C.R."/>
            <person name="Miklos G.L.G."/>
            <person name="Abril J.F."/>
            <person name="Agbayani A."/>
            <person name="An H.-J."/>
            <person name="Andrews-Pfannkoch C."/>
            <person name="Baldwin D."/>
            <person name="Ballew R.M."/>
            <person name="Basu A."/>
            <person name="Baxendale J."/>
            <person name="Bayraktaroglu L."/>
            <person name="Beasley E.M."/>
            <person name="Beeson K.Y."/>
            <person name="Benos P.V."/>
            <person name="Berman B.P."/>
            <person name="Bhandari D."/>
            <person name="Bolshakov S."/>
            <person name="Borkova D."/>
            <person name="Botchan M.R."/>
            <person name="Bouck J."/>
            <person name="Brokstein P."/>
            <person name="Brottier P."/>
            <person name="Burtis K.C."/>
            <person name="Busam D.A."/>
            <person name="Butler H."/>
            <person name="Cadieu E."/>
            <person name="Center A."/>
            <person name="Chandra I."/>
            <person name="Cherry J.M."/>
            <person name="Cawley S."/>
            <person name="Dahlke C."/>
            <person name="Davenport L.B."/>
            <person name="Davies P."/>
            <person name="de Pablos B."/>
            <person name="Delcher A."/>
            <person name="Deng Z."/>
            <person name="Mays A.D."/>
            <person name="Dew I."/>
            <person name="Dietz S.M."/>
            <person name="Dodson K."/>
            <person name="Doup L.E."/>
            <person name="Downes M."/>
            <person name="Dugan-Rocha S."/>
            <person name="Dunkov B.C."/>
            <person name="Dunn P."/>
            <person name="Durbin K.J."/>
            <person name="Evangelista C.C."/>
            <person name="Ferraz C."/>
            <person name="Ferriera S."/>
            <person name="Fleischmann W."/>
            <person name="Fosler C."/>
            <person name="Gabrielian A.E."/>
            <person name="Garg N.S."/>
            <person name="Gelbart W.M."/>
            <person name="Glasser K."/>
            <person name="Glodek A."/>
            <person name="Gong F."/>
            <person name="Gorrell J.H."/>
            <person name="Gu Z."/>
            <person name="Guan P."/>
            <person name="Harris M."/>
            <person name="Harris N.L."/>
            <person name="Harvey D.A."/>
            <person name="Heiman T.J."/>
            <person name="Hernandez J.R."/>
            <person name="Houck J."/>
            <person name="Hostin D."/>
            <person name="Houston K.A."/>
            <person name="Howland T.J."/>
            <person name="Wei M.-H."/>
            <person name="Ibegwam C."/>
            <person name="Jalali M."/>
            <person name="Kalush F."/>
            <person name="Karpen G.H."/>
            <person name="Ke Z."/>
            <person name="Kennison J.A."/>
            <person name="Ketchum K.A."/>
            <person name="Kimmel B.E."/>
            <person name="Kodira C.D."/>
            <person name="Kraft C.L."/>
            <person name="Kravitz S."/>
            <person name="Kulp D."/>
            <person name="Lai Z."/>
            <person name="Lasko P."/>
            <person name="Lei Y."/>
            <person name="Levitsky A.A."/>
            <person name="Li J.H."/>
            <person name="Li Z."/>
            <person name="Liang Y."/>
            <person name="Lin X."/>
            <person name="Liu X."/>
            <person name="Mattei B."/>
            <person name="McIntosh T.C."/>
            <person name="McLeod M.P."/>
            <person name="McPherson D."/>
            <person name="Merkulov G."/>
            <person name="Milshina N.V."/>
            <person name="Mobarry C."/>
            <person name="Morris J."/>
            <person name="Moshrefi A."/>
            <person name="Mount S.M."/>
            <person name="Moy M."/>
            <person name="Murphy B."/>
            <person name="Murphy L."/>
            <person name="Muzny D.M."/>
            <person name="Nelson D.L."/>
            <person name="Nelson D.R."/>
            <person name="Nelson K.A."/>
            <person name="Nixon K."/>
            <person name="Nusskern D.R."/>
            <person name="Pacleb J.M."/>
            <person name="Palazzolo M."/>
            <person name="Pittman G.S."/>
            <person name="Pan S."/>
            <person name="Pollard J."/>
            <person name="Puri V."/>
            <person name="Reese M.G."/>
            <person name="Reinert K."/>
            <person name="Remington K."/>
            <person name="Saunders R.D.C."/>
            <person name="Scheeler F."/>
            <person name="Shen H."/>
            <person name="Shue B.C."/>
            <person name="Siden-Kiamos I."/>
            <person name="Simpson M."/>
            <person name="Skupski M.P."/>
            <person name="Smith T.J."/>
            <person name="Spier E."/>
            <person name="Spradling A.C."/>
            <person name="Stapleton M."/>
            <person name="Strong R."/>
            <person name="Sun E."/>
            <person name="Svirskas R."/>
            <person name="Tector C."/>
            <person name="Turner R."/>
            <person name="Venter E."/>
            <person name="Wang A.H."/>
            <person name="Wang X."/>
            <person name="Wang Z.-Y."/>
            <person name="Wassarman D.A."/>
            <person name="Weinstock G.M."/>
            <person name="Weissenbach J."/>
            <person name="Williams S.M."/>
            <person name="Woodage T."/>
            <person name="Worley K.C."/>
            <person name="Wu D."/>
            <person name="Yang S."/>
            <person name="Yao Q.A."/>
            <person name="Ye J."/>
            <person name="Yeh R.-F."/>
            <person name="Zaveri J.S."/>
            <person name="Zhan M."/>
            <person name="Zhang G."/>
            <person name="Zhao Q."/>
            <person name="Zheng L."/>
            <person name="Zheng X.H."/>
            <person name="Zhong F.N."/>
            <person name="Zhong W."/>
            <person name="Zhou X."/>
            <person name="Zhu S.C."/>
            <person name="Zhu X."/>
            <person name="Smith H.O."/>
            <person name="Gibbs R.A."/>
            <person name="Myers E.W."/>
            <person name="Rubin G.M."/>
            <person name="Venter J.C."/>
        </authorList>
    </citation>
    <scope>NUCLEOTIDE SEQUENCE [LARGE SCALE GENOMIC DNA]</scope>
    <source>
        <strain>Berkeley</strain>
    </source>
</reference>
<reference key="4">
    <citation type="journal article" date="2002" name="Genome Biol.">
        <title>Annotation of the Drosophila melanogaster euchromatic genome: a systematic review.</title>
        <authorList>
            <person name="Misra S."/>
            <person name="Crosby M.A."/>
            <person name="Mungall C.J."/>
            <person name="Matthews B.B."/>
            <person name="Campbell K.S."/>
            <person name="Hradecky P."/>
            <person name="Huang Y."/>
            <person name="Kaminker J.S."/>
            <person name="Millburn G.H."/>
            <person name="Prochnik S.E."/>
            <person name="Smith C.D."/>
            <person name="Tupy J.L."/>
            <person name="Whitfield E.J."/>
            <person name="Bayraktaroglu L."/>
            <person name="Berman B.P."/>
            <person name="Bettencourt B.R."/>
            <person name="Celniker S.E."/>
            <person name="de Grey A.D.N.J."/>
            <person name="Drysdale R.A."/>
            <person name="Harris N.L."/>
            <person name="Richter J."/>
            <person name="Russo S."/>
            <person name="Schroeder A.J."/>
            <person name="Shu S.Q."/>
            <person name="Stapleton M."/>
            <person name="Yamada C."/>
            <person name="Ashburner M."/>
            <person name="Gelbart W.M."/>
            <person name="Rubin G.M."/>
            <person name="Lewis S.E."/>
        </authorList>
    </citation>
    <scope>GENOME REANNOTATION</scope>
    <source>
        <strain>Berkeley</strain>
    </source>
</reference>
<reference key="5">
    <citation type="journal article" date="2002" name="Genome Biol.">
        <title>A Drosophila full-length cDNA resource.</title>
        <authorList>
            <person name="Stapleton M."/>
            <person name="Carlson J.W."/>
            <person name="Brokstein P."/>
            <person name="Yu C."/>
            <person name="Champe M."/>
            <person name="George R.A."/>
            <person name="Guarin H."/>
            <person name="Kronmiller B."/>
            <person name="Pacleb J.M."/>
            <person name="Park S."/>
            <person name="Wan K.H."/>
            <person name="Rubin G.M."/>
            <person name="Celniker S.E."/>
        </authorList>
    </citation>
    <scope>NUCLEOTIDE SEQUENCE [LARGE SCALE MRNA]</scope>
    <source>
        <strain>Berkeley</strain>
        <tissue>Embryo</tissue>
    </source>
</reference>
<reference key="6">
    <citation type="submission" date="2004-10" db="EMBL/GenBank/DDBJ databases">
        <authorList>
            <person name="Stapleton M."/>
            <person name="Carlson J.W."/>
            <person name="Chavez C."/>
            <person name="Frise E."/>
            <person name="George R.A."/>
            <person name="Pacleb J.M."/>
            <person name="Park S."/>
            <person name="Wan K.H."/>
            <person name="Yu C."/>
            <person name="Rubin G.M."/>
            <person name="Celniker S.E."/>
        </authorList>
    </citation>
    <scope>NUCLEOTIDE SEQUENCE [LARGE SCALE MRNA]</scope>
    <source>
        <strain>Berkeley</strain>
        <tissue>Testis</tissue>
    </source>
</reference>
<reference key="7">
    <citation type="journal article" date="1997" name="Dev. Biol.">
        <title>The Drosophila ovarian tumor gene is required for the organization of actin filaments during multiple stages in oogenesis.</title>
        <authorList>
            <person name="Rodesch C."/>
            <person name="Pettus J."/>
            <person name="Nagoshi R.N."/>
        </authorList>
    </citation>
    <scope>SUBCELLULAR LOCATION</scope>
</reference>
<reference key="8">
    <citation type="journal article" date="2004" name="Science">
        <title>Acetylation by Tip60 is required for selective histone variant exchange at DNA lesions.</title>
        <authorList>
            <person name="Kusch T."/>
            <person name="Florens L."/>
            <person name="Macdonald W.H."/>
            <person name="Swanson S.K."/>
            <person name="Glaser R.L."/>
            <person name="Yates J.R. III"/>
            <person name="Abmayr S.M."/>
            <person name="Washburn M.P."/>
            <person name="Workman J.L."/>
        </authorList>
    </citation>
    <scope>IDENTIFICATION IN THE TIP60 COMPLEX</scope>
    <scope>FUNCTION</scope>
</reference>
<reference key="9">
    <citation type="journal article" date="2011" name="Science">
        <title>Direct redox regulation of F-actin assembly and disassembly by Mical.</title>
        <authorList>
            <person name="Hung R.J."/>
            <person name="Pak C.W."/>
            <person name="Terman J.R."/>
        </authorList>
    </citation>
    <scope>OXIDATION AT MET-45 AND MET-48</scope>
</reference>
<reference key="10">
    <citation type="journal article" date="2018" name="Elife">
        <title>SETD3 protein is the actin-specific histidine N-methyltransferase.</title>
        <authorList>
            <person name="Kwiatkowski S."/>
            <person name="Seliga A.K."/>
            <person name="Vertommen D."/>
            <person name="Terreri M."/>
            <person name="Ishikawa T."/>
            <person name="Grabowska I."/>
            <person name="Tiebe M."/>
            <person name="Teleman A.A."/>
            <person name="Jagielski A.K."/>
            <person name="Veiga-da-Cunha M."/>
            <person name="Drozak J."/>
        </authorList>
    </citation>
    <scope>METHYLATION AT HIS-74</scope>
</reference>
<dbReference type="EC" id="3.6.4.-" evidence="3"/>
<dbReference type="EMBL" id="X12452">
    <property type="protein sequence ID" value="CAA30982.1"/>
    <property type="molecule type" value="Genomic_DNA"/>
</dbReference>
<dbReference type="EMBL" id="K00674">
    <property type="protein sequence ID" value="AAA28320.1"/>
    <property type="molecule type" value="Genomic_DNA"/>
</dbReference>
<dbReference type="EMBL" id="AE014297">
    <property type="protein sequence ID" value="AAF54950.2"/>
    <property type="molecule type" value="Genomic_DNA"/>
</dbReference>
<dbReference type="EMBL" id="AE014297">
    <property type="protein sequence ID" value="AAN13567.1"/>
    <property type="molecule type" value="Genomic_DNA"/>
</dbReference>
<dbReference type="EMBL" id="AY089587">
    <property type="protein sequence ID" value="AAL90325.1"/>
    <property type="molecule type" value="mRNA"/>
</dbReference>
<dbReference type="EMBL" id="AY113405">
    <property type="protein sequence ID" value="AAM29410.1"/>
    <property type="status" value="ALT_SEQ"/>
    <property type="molecule type" value="mRNA"/>
</dbReference>
<dbReference type="EMBL" id="BT016152">
    <property type="protein sequence ID" value="AAV37037.1"/>
    <property type="molecule type" value="mRNA"/>
</dbReference>
<dbReference type="PIR" id="S04538">
    <property type="entry name" value="S04538"/>
</dbReference>
<dbReference type="RefSeq" id="NP_001287314.1">
    <property type="nucleotide sequence ID" value="NM_001300385.1"/>
</dbReference>
<dbReference type="RefSeq" id="NP_477091.1">
    <property type="nucleotide sequence ID" value="NM_057743.5"/>
</dbReference>
<dbReference type="RefSeq" id="NP_731812.1">
    <property type="nucleotide sequence ID" value="NM_169525.2"/>
</dbReference>
<dbReference type="SMR" id="P10981"/>
<dbReference type="BioGRID" id="71541">
    <property type="interactions" value="25"/>
</dbReference>
<dbReference type="ComplexPortal" id="CPX-2264">
    <property type="entry name" value="NuA4 histone acetyltransferase complex"/>
</dbReference>
<dbReference type="DIP" id="DIP-18091N"/>
<dbReference type="FunCoup" id="P10981">
    <property type="interactions" value="17"/>
</dbReference>
<dbReference type="IntAct" id="P10981">
    <property type="interactions" value="49"/>
</dbReference>
<dbReference type="STRING" id="7227.FBpp0312019"/>
<dbReference type="PaxDb" id="7227-FBpp0082253"/>
<dbReference type="DNASU" id="48632"/>
<dbReference type="EnsemblMetazoa" id="FBtr0082785">
    <property type="protein sequence ID" value="FBpp0082253"/>
    <property type="gene ID" value="FBgn0000046"/>
</dbReference>
<dbReference type="EnsemblMetazoa" id="FBtr0082786">
    <property type="protein sequence ID" value="FBpp0082254"/>
    <property type="gene ID" value="FBgn0000046"/>
</dbReference>
<dbReference type="EnsemblMetazoa" id="FBtr0346242">
    <property type="protein sequence ID" value="FBpp0312019"/>
    <property type="gene ID" value="FBgn0000046"/>
</dbReference>
<dbReference type="GeneID" id="48632"/>
<dbReference type="KEGG" id="dme:Dmel_CG18290"/>
<dbReference type="AGR" id="FB:FBgn0000046"/>
<dbReference type="CTD" id="48632"/>
<dbReference type="FlyBase" id="FBgn0000046">
    <property type="gene designation" value="Act87E"/>
</dbReference>
<dbReference type="VEuPathDB" id="VectorBase:FBgn0000046"/>
<dbReference type="eggNOG" id="KOG0676">
    <property type="taxonomic scope" value="Eukaryota"/>
</dbReference>
<dbReference type="GeneTree" id="ENSGT00940000166560"/>
<dbReference type="HOGENOM" id="CLU_027965_0_2_1"/>
<dbReference type="InParanoid" id="P10981"/>
<dbReference type="OMA" id="NEMQVAN"/>
<dbReference type="OrthoDB" id="422673at2759"/>
<dbReference type="PhylomeDB" id="P10981"/>
<dbReference type="Reactome" id="R-DME-445355">
    <property type="pathway name" value="Smooth Muscle Contraction"/>
</dbReference>
<dbReference type="BioGRID-ORCS" id="48632">
    <property type="hits" value="0 hits in 3 CRISPR screens"/>
</dbReference>
<dbReference type="GenomeRNAi" id="48632"/>
<dbReference type="PRO" id="PR:P10981"/>
<dbReference type="Proteomes" id="UP000000803">
    <property type="component" value="Chromosome 3R"/>
</dbReference>
<dbReference type="Bgee" id="FBgn0000046">
    <property type="expression patterns" value="Expressed in oviduct (Drosophila) and 118 other cell types or tissues"/>
</dbReference>
<dbReference type="ExpressionAtlas" id="P10981">
    <property type="expression patterns" value="baseline and differential"/>
</dbReference>
<dbReference type="GO" id="GO:0015629">
    <property type="term" value="C:actin cytoskeleton"/>
    <property type="evidence" value="ECO:0000318"/>
    <property type="project" value="GO_Central"/>
</dbReference>
<dbReference type="GO" id="GO:0005737">
    <property type="term" value="C:cytoplasm"/>
    <property type="evidence" value="ECO:0007669"/>
    <property type="project" value="UniProtKB-KW"/>
</dbReference>
<dbReference type="GO" id="GO:0035267">
    <property type="term" value="C:NuA4 histone acetyltransferase complex"/>
    <property type="evidence" value="ECO:0000314"/>
    <property type="project" value="FlyBase"/>
</dbReference>
<dbReference type="GO" id="GO:0005524">
    <property type="term" value="F:ATP binding"/>
    <property type="evidence" value="ECO:0007669"/>
    <property type="project" value="UniProtKB-KW"/>
</dbReference>
<dbReference type="GO" id="GO:0016787">
    <property type="term" value="F:hydrolase activity"/>
    <property type="evidence" value="ECO:0007669"/>
    <property type="project" value="UniProtKB-KW"/>
</dbReference>
<dbReference type="GO" id="GO:0140861">
    <property type="term" value="P:DNA repair-dependent chromatin remodeling"/>
    <property type="evidence" value="ECO:0000314"/>
    <property type="project" value="FlyBase"/>
</dbReference>
<dbReference type="GO" id="GO:0000281">
    <property type="term" value="P:mitotic cytokinesis"/>
    <property type="evidence" value="ECO:0000318"/>
    <property type="project" value="GO_Central"/>
</dbReference>
<dbReference type="GO" id="GO:0030723">
    <property type="term" value="P:ovarian fusome organization"/>
    <property type="evidence" value="ECO:0000270"/>
    <property type="project" value="UniProtKB"/>
</dbReference>
<dbReference type="CDD" id="cd10224">
    <property type="entry name" value="ASKHA_NBD_actin"/>
    <property type="match status" value="1"/>
</dbReference>
<dbReference type="FunFam" id="2.30.36.70:FF:000001">
    <property type="entry name" value="Actin, alpha skeletal muscle"/>
    <property type="match status" value="1"/>
</dbReference>
<dbReference type="FunFam" id="3.30.420.40:FF:000131">
    <property type="entry name" value="Actin, alpha skeletal muscle"/>
    <property type="match status" value="1"/>
</dbReference>
<dbReference type="FunFam" id="3.30.420.40:FF:000291">
    <property type="entry name" value="Actin, alpha skeletal muscle"/>
    <property type="match status" value="1"/>
</dbReference>
<dbReference type="FunFam" id="3.90.640.10:FF:000047">
    <property type="entry name" value="Actin, alpha skeletal muscle"/>
    <property type="match status" value="1"/>
</dbReference>
<dbReference type="FunFam" id="3.30.420.40:FF:000058">
    <property type="entry name" value="Putative actin-related protein 5"/>
    <property type="match status" value="1"/>
</dbReference>
<dbReference type="Gene3D" id="3.30.420.40">
    <property type="match status" value="2"/>
</dbReference>
<dbReference type="Gene3D" id="3.90.640.10">
    <property type="entry name" value="Actin, Chain A, domain 4"/>
    <property type="match status" value="1"/>
</dbReference>
<dbReference type="InterPro" id="IPR004000">
    <property type="entry name" value="Actin"/>
</dbReference>
<dbReference type="InterPro" id="IPR020902">
    <property type="entry name" value="Actin/actin-like_CS"/>
</dbReference>
<dbReference type="InterPro" id="IPR004001">
    <property type="entry name" value="Actin_CS"/>
</dbReference>
<dbReference type="InterPro" id="IPR043129">
    <property type="entry name" value="ATPase_NBD"/>
</dbReference>
<dbReference type="PANTHER" id="PTHR11937">
    <property type="entry name" value="ACTIN"/>
    <property type="match status" value="1"/>
</dbReference>
<dbReference type="Pfam" id="PF00022">
    <property type="entry name" value="Actin"/>
    <property type="match status" value="1"/>
</dbReference>
<dbReference type="PRINTS" id="PR00190">
    <property type="entry name" value="ACTIN"/>
</dbReference>
<dbReference type="SMART" id="SM00268">
    <property type="entry name" value="ACTIN"/>
    <property type="match status" value="1"/>
</dbReference>
<dbReference type="SUPFAM" id="SSF53067">
    <property type="entry name" value="Actin-like ATPase domain"/>
    <property type="match status" value="2"/>
</dbReference>
<dbReference type="PROSITE" id="PS00406">
    <property type="entry name" value="ACTINS_1"/>
    <property type="match status" value="1"/>
</dbReference>
<dbReference type="PROSITE" id="PS00432">
    <property type="entry name" value="ACTINS_2"/>
    <property type="match status" value="1"/>
</dbReference>
<dbReference type="PROSITE" id="PS01132">
    <property type="entry name" value="ACTINS_ACT_LIKE"/>
    <property type="match status" value="1"/>
</dbReference>
<organism>
    <name type="scientific">Drosophila melanogaster</name>
    <name type="common">Fruit fly</name>
    <dbReference type="NCBI Taxonomy" id="7227"/>
    <lineage>
        <taxon>Eukaryota</taxon>
        <taxon>Metazoa</taxon>
        <taxon>Ecdysozoa</taxon>
        <taxon>Arthropoda</taxon>
        <taxon>Hexapoda</taxon>
        <taxon>Insecta</taxon>
        <taxon>Pterygota</taxon>
        <taxon>Neoptera</taxon>
        <taxon>Endopterygota</taxon>
        <taxon>Diptera</taxon>
        <taxon>Brachycera</taxon>
        <taxon>Muscomorpha</taxon>
        <taxon>Ephydroidea</taxon>
        <taxon>Drosophilidae</taxon>
        <taxon>Drosophila</taxon>
        <taxon>Sophophora</taxon>
    </lineage>
</organism>
<keyword id="KW-0007">Acetylation</keyword>
<keyword id="KW-0067">ATP-binding</keyword>
<keyword id="KW-0963">Cytoplasm</keyword>
<keyword id="KW-0206">Cytoskeleton</keyword>
<keyword id="KW-0378">Hydrolase</keyword>
<keyword id="KW-0488">Methylation</keyword>
<keyword id="KW-0547">Nucleotide-binding</keyword>
<keyword id="KW-0558">Oxidation</keyword>
<keyword id="KW-1185">Reference proteome</keyword>
<feature type="propeptide" id="PRO_0000000664" description="Removed in mature form" evidence="1">
    <location>
        <begin position="1"/>
        <end position="2"/>
    </location>
</feature>
<feature type="chain" id="PRO_0000000665" description="Actin-87E">
    <location>
        <begin position="3"/>
        <end position="376"/>
    </location>
</feature>
<feature type="modified residue" description="N-acetylaspartate" evidence="1">
    <location>
        <position position="3"/>
    </location>
</feature>
<feature type="modified residue" description="Methionine sulfoxide" evidence="5">
    <location>
        <position position="45"/>
    </location>
</feature>
<feature type="modified residue" description="Methionine sulfoxide" evidence="5">
    <location>
        <position position="48"/>
    </location>
</feature>
<feature type="modified residue" description="Tele-methylhistidine" evidence="6">
    <location>
        <position position="74"/>
    </location>
</feature>
<comment type="function">
    <text evidence="4">Actins are highly conserved proteins that are involved in various types of cell motility and are ubiquitously expressed in all eukaryotic cells.</text>
</comment>
<comment type="function">
    <text evidence="4">Multiple isoforms are involved in various cellular functions such as cytoskeleton structure, cell mobility, chromosome movement and muscle contraction.</text>
</comment>
<comment type="catalytic activity">
    <reaction evidence="3">
        <text>ATP + H2O = ADP + phosphate + H(+)</text>
        <dbReference type="Rhea" id="RHEA:13065"/>
        <dbReference type="ChEBI" id="CHEBI:15377"/>
        <dbReference type="ChEBI" id="CHEBI:15378"/>
        <dbReference type="ChEBI" id="CHEBI:30616"/>
        <dbReference type="ChEBI" id="CHEBI:43474"/>
        <dbReference type="ChEBI" id="CHEBI:456216"/>
    </reaction>
</comment>
<comment type="subunit">
    <text evidence="4">Component of the Tip60 chromatin-remodeling complex which contains the catalytic subunit Tip60 and the subunits Domino, Tra1, Brd8, E(Pc), DMAP1, Pontin, Reptin, Ing3, Act87E, BAP55, Mrg15, MrgBP, Gas41 and YL-1.</text>
</comment>
<comment type="interaction">
    <interactant intactId="EBI-135521">
        <id>P10981</id>
    </interactant>
    <interactant intactId="EBI-178503">
        <id>P02574</id>
        <label>Act79B</label>
    </interactant>
    <organismsDiffer>false</organismsDiffer>
    <experiments>3</experiments>
</comment>
<comment type="interaction">
    <interactant intactId="EBI-135521">
        <id>P10981</id>
    </interactant>
    <interactant intactId="EBI-15115807">
        <id>Q9VPX6</id>
        <label>capt</label>
    </interactant>
    <organismsDiffer>false</organismsDiffer>
    <experiments>3</experiments>
</comment>
<comment type="subcellular location">
    <subcellularLocation>
        <location evidence="7">Cytoplasm</location>
        <location evidence="7">Cytoskeleton</location>
    </subcellularLocation>
    <text evidence="7">Associated with spectrosomes during female cystocyte proliferation and differentiation, but dissociates, or becomes undetectable, upon fusome maturation (PubMed:9344535). Component of the inner rim of ring canals connecting the cytoplasm of nurse cells and oocyte during oogenesis (PubMed:9344535).</text>
</comment>
<comment type="PTM">
    <text evidence="2">N-terminal cleavage of acetylated cysteine of immature actin by ACTMAP.</text>
</comment>
<comment type="PTM">
    <text evidence="5">Oxidation of Met-45 by Mical to form methionine sulfoxide promotes actin filament depolymerization. Methionine sulfoxide is produced stereospecifically, but it is not known whether the (S)-S-oxide or the (R)-S-oxide is produced.</text>
</comment>
<comment type="miscellaneous">
    <text>In Drosophila there are 6 closely related actin genes.</text>
</comment>
<comment type="similarity">
    <text evidence="8">Belongs to the actin family.</text>
</comment>
<comment type="sequence caution" evidence="8">
    <conflict type="erroneous translation">
        <sequence resource="EMBL-CDS" id="AAM29410"/>
    </conflict>
</comment>
<protein>
    <recommendedName>
        <fullName>Actin-87E</fullName>
        <ecNumber evidence="3">3.6.4.-</ecNumber>
    </recommendedName>
</protein>
<name>ACT5_DROME</name>
<accession>P10981</accession>
<accession>A4V2T6</accession>
<accession>Q5U0U0</accession>
<accession>Q8MZ23</accession>
<accession>Q9VFU9</accession>
<sequence length="376" mass="41802">MCDDEVAALVVDNGSGMCKAGFAGDDAPRAVFPSIVGRPRHQGVMVGMGQKDSYVGDEAQSKRGILTLKYPIEHGIITNWDDMEKIWHHTFYNELRVAPEEHPVLLTEAPLNPKANREKMTQIMFETFNAPAMYVAIQAVLSLYASGRTTGIVLDSGDGVSHTVPIYEGYALPHAILRLDLAGRDLTDYLMKILTERGYSFTTTAEREIVRDIKEKLCYVALDFEQEMATAAASTSLEKSYELPDGQVITIGNERFRCPESLFQPSFLGMESCGIHETVYNSIMKCDVDIRKDLYANIVMSGGTTMYPGIADRMQKEITALAPSTIKIKIIAPPERKYSVWIGGSILASLSTFQQMWISKQEYDESGPGIVHRKCF</sequence>
<gene>
    <name type="primary">Act87E</name>
    <name type="ORF">CG18290</name>
</gene>